<keyword id="KW-0413">Isomerase</keyword>
<keyword id="KW-0819">tRNA processing</keyword>
<feature type="chain" id="PRO_0000057487" description="tRNA pseudouridine synthase A">
    <location>
        <begin position="1"/>
        <end position="264"/>
    </location>
</feature>
<feature type="active site" description="Nucleophile" evidence="1">
    <location>
        <position position="51"/>
    </location>
</feature>
<feature type="binding site" evidence="1">
    <location>
        <position position="109"/>
    </location>
    <ligand>
        <name>substrate</name>
    </ligand>
</feature>
<accession>Q7M7J4</accession>
<protein>
    <recommendedName>
        <fullName evidence="1">tRNA pseudouridine synthase A</fullName>
        <ecNumber evidence="1">5.4.99.12</ecNumber>
    </recommendedName>
    <alternativeName>
        <fullName evidence="1">tRNA pseudouridine(38-40) synthase</fullName>
    </alternativeName>
    <alternativeName>
        <fullName evidence="1">tRNA pseudouridylate synthase I</fullName>
    </alternativeName>
    <alternativeName>
        <fullName evidence="1">tRNA-uridine isomerase I</fullName>
    </alternativeName>
</protein>
<organism>
    <name type="scientific">Vibrio vulnificus (strain YJ016)</name>
    <dbReference type="NCBI Taxonomy" id="196600"/>
    <lineage>
        <taxon>Bacteria</taxon>
        <taxon>Pseudomonadati</taxon>
        <taxon>Pseudomonadota</taxon>
        <taxon>Gammaproteobacteria</taxon>
        <taxon>Vibrionales</taxon>
        <taxon>Vibrionaceae</taxon>
        <taxon>Vibrio</taxon>
    </lineage>
</organism>
<name>TRUA_VIBVY</name>
<evidence type="ECO:0000255" key="1">
    <source>
        <dbReference type="HAMAP-Rule" id="MF_00171"/>
    </source>
</evidence>
<reference key="1">
    <citation type="journal article" date="2003" name="Genome Res.">
        <title>Comparative genome analysis of Vibrio vulnificus, a marine pathogen.</title>
        <authorList>
            <person name="Chen C.-Y."/>
            <person name="Wu K.-M."/>
            <person name="Chang Y.-C."/>
            <person name="Chang C.-H."/>
            <person name="Tsai H.-C."/>
            <person name="Liao T.-L."/>
            <person name="Liu Y.-M."/>
            <person name="Chen H.-J."/>
            <person name="Shen A.B.-T."/>
            <person name="Li J.-C."/>
            <person name="Su T.-L."/>
            <person name="Shao C.-P."/>
            <person name="Lee C.-T."/>
            <person name="Hor L.-I."/>
            <person name="Tsai S.-F."/>
        </authorList>
    </citation>
    <scope>NUCLEOTIDE SEQUENCE [LARGE SCALE GENOMIC DNA]</scope>
    <source>
        <strain>YJ016</strain>
    </source>
</reference>
<dbReference type="EC" id="5.4.99.12" evidence="1"/>
<dbReference type="EMBL" id="BA000037">
    <property type="protein sequence ID" value="BAC95189.1"/>
    <property type="molecule type" value="Genomic_DNA"/>
</dbReference>
<dbReference type="RefSeq" id="WP_011079889.1">
    <property type="nucleotide sequence ID" value="NC_005139.1"/>
</dbReference>
<dbReference type="SMR" id="Q7M7J4"/>
<dbReference type="STRING" id="672.VV93_v1c21280"/>
<dbReference type="KEGG" id="vvy:VV2425"/>
<dbReference type="eggNOG" id="COG0101">
    <property type="taxonomic scope" value="Bacteria"/>
</dbReference>
<dbReference type="HOGENOM" id="CLU_014673_0_2_6"/>
<dbReference type="Proteomes" id="UP000002675">
    <property type="component" value="Chromosome I"/>
</dbReference>
<dbReference type="GO" id="GO:0003723">
    <property type="term" value="F:RNA binding"/>
    <property type="evidence" value="ECO:0007669"/>
    <property type="project" value="InterPro"/>
</dbReference>
<dbReference type="GO" id="GO:0160147">
    <property type="term" value="F:tRNA pseudouridine(38-40) synthase activity"/>
    <property type="evidence" value="ECO:0007669"/>
    <property type="project" value="UniProtKB-EC"/>
</dbReference>
<dbReference type="GO" id="GO:0031119">
    <property type="term" value="P:tRNA pseudouridine synthesis"/>
    <property type="evidence" value="ECO:0007669"/>
    <property type="project" value="UniProtKB-UniRule"/>
</dbReference>
<dbReference type="CDD" id="cd02570">
    <property type="entry name" value="PseudoU_synth_EcTruA"/>
    <property type="match status" value="1"/>
</dbReference>
<dbReference type="FunFam" id="3.30.70.580:FF:000001">
    <property type="entry name" value="tRNA pseudouridine synthase A"/>
    <property type="match status" value="1"/>
</dbReference>
<dbReference type="FunFam" id="3.30.70.660:FF:000001">
    <property type="entry name" value="tRNA pseudouridine synthase A"/>
    <property type="match status" value="1"/>
</dbReference>
<dbReference type="Gene3D" id="3.30.70.660">
    <property type="entry name" value="Pseudouridine synthase I, catalytic domain, C-terminal subdomain"/>
    <property type="match status" value="1"/>
</dbReference>
<dbReference type="Gene3D" id="3.30.70.580">
    <property type="entry name" value="Pseudouridine synthase I, catalytic domain, N-terminal subdomain"/>
    <property type="match status" value="1"/>
</dbReference>
<dbReference type="HAMAP" id="MF_00171">
    <property type="entry name" value="TruA"/>
    <property type="match status" value="1"/>
</dbReference>
<dbReference type="InterPro" id="IPR020103">
    <property type="entry name" value="PsdUridine_synth_cat_dom_sf"/>
</dbReference>
<dbReference type="InterPro" id="IPR001406">
    <property type="entry name" value="PsdUridine_synth_TruA"/>
</dbReference>
<dbReference type="InterPro" id="IPR020097">
    <property type="entry name" value="PsdUridine_synth_TruA_a/b_dom"/>
</dbReference>
<dbReference type="InterPro" id="IPR020095">
    <property type="entry name" value="PsdUridine_synth_TruA_C"/>
</dbReference>
<dbReference type="InterPro" id="IPR020094">
    <property type="entry name" value="TruA/RsuA/RluB/E/F_N"/>
</dbReference>
<dbReference type="NCBIfam" id="TIGR00071">
    <property type="entry name" value="hisT_truA"/>
    <property type="match status" value="1"/>
</dbReference>
<dbReference type="PANTHER" id="PTHR11142">
    <property type="entry name" value="PSEUDOURIDYLATE SYNTHASE"/>
    <property type="match status" value="1"/>
</dbReference>
<dbReference type="PANTHER" id="PTHR11142:SF0">
    <property type="entry name" value="TRNA PSEUDOURIDINE SYNTHASE-LIKE 1"/>
    <property type="match status" value="1"/>
</dbReference>
<dbReference type="Pfam" id="PF01416">
    <property type="entry name" value="PseudoU_synth_1"/>
    <property type="match status" value="2"/>
</dbReference>
<dbReference type="PIRSF" id="PIRSF001430">
    <property type="entry name" value="tRNA_psdUrid_synth"/>
    <property type="match status" value="1"/>
</dbReference>
<dbReference type="SUPFAM" id="SSF55120">
    <property type="entry name" value="Pseudouridine synthase"/>
    <property type="match status" value="1"/>
</dbReference>
<comment type="function">
    <text evidence="1">Formation of pseudouridine at positions 38, 39 and 40 in the anticodon stem and loop of transfer RNAs.</text>
</comment>
<comment type="catalytic activity">
    <reaction evidence="1">
        <text>uridine(38/39/40) in tRNA = pseudouridine(38/39/40) in tRNA</text>
        <dbReference type="Rhea" id="RHEA:22376"/>
        <dbReference type="Rhea" id="RHEA-COMP:10085"/>
        <dbReference type="Rhea" id="RHEA-COMP:10087"/>
        <dbReference type="ChEBI" id="CHEBI:65314"/>
        <dbReference type="ChEBI" id="CHEBI:65315"/>
        <dbReference type="EC" id="5.4.99.12"/>
    </reaction>
</comment>
<comment type="subunit">
    <text evidence="1">Homodimer.</text>
</comment>
<comment type="similarity">
    <text evidence="1">Belongs to the tRNA pseudouridine synthase TruA family.</text>
</comment>
<sequence>MRIALGIEYNGTDYFGWQRQREVASVQEKLEKALSKVANHPVEVQCAGRTDAGVHGTGQVVHFDTNVERKMVAWTMGANANLPKDIAVRWAKAVPDEFHARFSATARRYRYIIFNHALRPGILGSGVSHYHGELDEKKMHEAGQYLLGENDFTSFRAVQCQSLSPFRNMIHLNVTRHGHYVVIDIKANAFVHHMVRNITGSLIMVGRGEQDPEWIKWLLEAKDRKLAGPTAKAEGLYLVDVDYPEEFDLPRESIGPLFLPDNLN</sequence>
<proteinExistence type="inferred from homology"/>
<gene>
    <name evidence="1" type="primary">truA</name>
    <name type="ordered locus">VV2425</name>
</gene>